<evidence type="ECO:0000255" key="1">
    <source>
        <dbReference type="HAMAP-Rule" id="MF_00106"/>
    </source>
</evidence>
<organism>
    <name type="scientific">Yersinia pseudotuberculosis serotype O:1b (strain IP 31758)</name>
    <dbReference type="NCBI Taxonomy" id="349747"/>
    <lineage>
        <taxon>Bacteria</taxon>
        <taxon>Pseudomonadati</taxon>
        <taxon>Pseudomonadota</taxon>
        <taxon>Gammaproteobacteria</taxon>
        <taxon>Enterobacterales</taxon>
        <taxon>Yersiniaceae</taxon>
        <taxon>Yersinia</taxon>
    </lineage>
</organism>
<protein>
    <recommendedName>
        <fullName evidence="1">Mannonate dehydratase</fullName>
        <ecNumber evidence="1">4.2.1.8</ecNumber>
    </recommendedName>
    <alternativeName>
        <fullName evidence="1">D-mannonate hydro-lyase</fullName>
    </alternativeName>
</protein>
<keyword id="KW-0408">Iron</keyword>
<keyword id="KW-0456">Lyase</keyword>
<keyword id="KW-0464">Manganese</keyword>
<sequence>MEQTWRWYGPNDPVSLDDIRQAGATGVVTALHHIPNGVVWPVSEIKQRQAELAAKNLVWSVVESVPIHEDIKTHSGNYQQYIENYQQTLRNIAECGIDTVCYNFMPILDWTRTDLEYELPDGSKALRFDQIAFAAFELHILKRPGASNDYTAEEQVQAEAYFNAMTEADIAKLTGNIIAGLPGAEEGYTLDQFRARLAEYDGIDKAQLRENMAYFLRAIIPVAEQVGLRMAVHPDDPPRPILGLPRIVSTIEDMQWLKETVDSIHNGFTMCTGSYGVRADNDLVKMIETFGDRIHFTHLRSTCREGNPKTFHEGGHLQGDVDMYSVVKAILTEEQRRQSLGDMRPIPMRPDHGHQMLDDLHKKTNPGYSAIGRLKGLAEVRGVELALKRTFFPDLKQ</sequence>
<accession>A7FK86</accession>
<reference key="1">
    <citation type="journal article" date="2007" name="PLoS Genet.">
        <title>The complete genome sequence of Yersinia pseudotuberculosis IP31758, the causative agent of Far East scarlet-like fever.</title>
        <authorList>
            <person name="Eppinger M."/>
            <person name="Rosovitz M.J."/>
            <person name="Fricke W.F."/>
            <person name="Rasko D.A."/>
            <person name="Kokorina G."/>
            <person name="Fayolle C."/>
            <person name="Lindler L.E."/>
            <person name="Carniel E."/>
            <person name="Ravel J."/>
        </authorList>
    </citation>
    <scope>NUCLEOTIDE SEQUENCE [LARGE SCALE GENOMIC DNA]</scope>
    <source>
        <strain>IP 31758</strain>
    </source>
</reference>
<name>UXUA_YERP3</name>
<feature type="chain" id="PRO_1000057704" description="Mannonate dehydratase">
    <location>
        <begin position="1"/>
        <end position="397"/>
    </location>
</feature>
<comment type="function">
    <text evidence="1">Catalyzes the dehydration of D-mannonate.</text>
</comment>
<comment type="catalytic activity">
    <reaction evidence="1">
        <text>D-mannonate = 2-dehydro-3-deoxy-D-gluconate + H2O</text>
        <dbReference type="Rhea" id="RHEA:20097"/>
        <dbReference type="ChEBI" id="CHEBI:15377"/>
        <dbReference type="ChEBI" id="CHEBI:17767"/>
        <dbReference type="ChEBI" id="CHEBI:57990"/>
        <dbReference type="EC" id="4.2.1.8"/>
    </reaction>
</comment>
<comment type="cofactor">
    <cofactor evidence="1">
        <name>Fe(2+)</name>
        <dbReference type="ChEBI" id="CHEBI:29033"/>
    </cofactor>
    <cofactor evidence="1">
        <name>Mn(2+)</name>
        <dbReference type="ChEBI" id="CHEBI:29035"/>
    </cofactor>
</comment>
<comment type="pathway">
    <text evidence="1">Carbohydrate metabolism; pentose and glucuronate interconversion.</text>
</comment>
<comment type="similarity">
    <text evidence="1">Belongs to the mannonate dehydratase family.</text>
</comment>
<proteinExistence type="inferred from homology"/>
<gene>
    <name evidence="1" type="primary">uxuA</name>
    <name type="ordered locus">YpsIP31758_2699</name>
</gene>
<dbReference type="EC" id="4.2.1.8" evidence="1"/>
<dbReference type="EMBL" id="CP000720">
    <property type="protein sequence ID" value="ABS46315.1"/>
    <property type="molecule type" value="Genomic_DNA"/>
</dbReference>
<dbReference type="RefSeq" id="WP_011192020.1">
    <property type="nucleotide sequence ID" value="NC_009708.1"/>
</dbReference>
<dbReference type="SMR" id="A7FK86"/>
<dbReference type="GeneID" id="49786604"/>
<dbReference type="KEGG" id="ypi:YpsIP31758_2699"/>
<dbReference type="HOGENOM" id="CLU_058621_2_0_6"/>
<dbReference type="UniPathway" id="UPA00246"/>
<dbReference type="Proteomes" id="UP000002412">
    <property type="component" value="Chromosome"/>
</dbReference>
<dbReference type="GO" id="GO:0008198">
    <property type="term" value="F:ferrous iron binding"/>
    <property type="evidence" value="ECO:0007669"/>
    <property type="project" value="TreeGrafter"/>
</dbReference>
<dbReference type="GO" id="GO:0030145">
    <property type="term" value="F:manganese ion binding"/>
    <property type="evidence" value="ECO:0007669"/>
    <property type="project" value="TreeGrafter"/>
</dbReference>
<dbReference type="GO" id="GO:0008927">
    <property type="term" value="F:mannonate dehydratase activity"/>
    <property type="evidence" value="ECO:0007669"/>
    <property type="project" value="UniProtKB-UniRule"/>
</dbReference>
<dbReference type="GO" id="GO:0042840">
    <property type="term" value="P:D-glucuronate catabolic process"/>
    <property type="evidence" value="ECO:0007669"/>
    <property type="project" value="TreeGrafter"/>
</dbReference>
<dbReference type="FunFam" id="3.20.20.150:FF:000010">
    <property type="entry name" value="Mannonate dehydratase"/>
    <property type="match status" value="1"/>
</dbReference>
<dbReference type="Gene3D" id="3.20.20.150">
    <property type="entry name" value="Divalent-metal-dependent TIM barrel enzymes"/>
    <property type="match status" value="1"/>
</dbReference>
<dbReference type="HAMAP" id="MF_00106">
    <property type="entry name" value="UxuA"/>
    <property type="match status" value="1"/>
</dbReference>
<dbReference type="InterPro" id="IPR004628">
    <property type="entry name" value="Man_deHydtase"/>
</dbReference>
<dbReference type="InterPro" id="IPR036237">
    <property type="entry name" value="Xyl_isomerase-like_sf"/>
</dbReference>
<dbReference type="NCBIfam" id="NF003027">
    <property type="entry name" value="PRK03906.1"/>
    <property type="match status" value="1"/>
</dbReference>
<dbReference type="NCBIfam" id="TIGR00695">
    <property type="entry name" value="uxuA"/>
    <property type="match status" value="1"/>
</dbReference>
<dbReference type="PANTHER" id="PTHR30387">
    <property type="entry name" value="MANNONATE DEHYDRATASE"/>
    <property type="match status" value="1"/>
</dbReference>
<dbReference type="PANTHER" id="PTHR30387:SF2">
    <property type="entry name" value="MANNONATE DEHYDRATASE"/>
    <property type="match status" value="1"/>
</dbReference>
<dbReference type="Pfam" id="PF03786">
    <property type="entry name" value="UxuA"/>
    <property type="match status" value="1"/>
</dbReference>
<dbReference type="PIRSF" id="PIRSF016049">
    <property type="entry name" value="Man_dehyd"/>
    <property type="match status" value="1"/>
</dbReference>
<dbReference type="SUPFAM" id="SSF51658">
    <property type="entry name" value="Xylose isomerase-like"/>
    <property type="match status" value="1"/>
</dbReference>